<keyword id="KW-0974">Archaeal flagellum</keyword>
<keyword id="KW-0325">Glycoprotein</keyword>
<proteinExistence type="evidence at protein level"/>
<name>FLAA_METVO</name>
<reference key="1">
    <citation type="journal article" date="1991" name="J. Bacteriol.">
        <title>Cloning and sequencing of a multigene family encoding the flagellins of Methanococcus voltae.</title>
        <authorList>
            <person name="Kalmokoff M.L."/>
            <person name="Jarrell K.F."/>
        </authorList>
    </citation>
    <scope>NUCLEOTIDE SEQUENCE [GENOMIC DNA]</scope>
    <source>
        <strain>ATCC 33273 / DSM 1537 / NBRC 100457 / OCM 70 / PS</strain>
    </source>
</reference>
<reference key="2">
    <citation type="journal article" date="2005" name="J. Biol. Chem.">
        <title>Identification and characterization of the unique N-linked glycan common to the flagellins and S-layer glycoprotein of Methanococcus voltae.</title>
        <authorList>
            <person name="Voisin S."/>
            <person name="Houliston R.S."/>
            <person name="Kelly J."/>
            <person name="Brisson J.-R."/>
            <person name="Watson D."/>
            <person name="Bardy S.L."/>
            <person name="Jarrell K.F."/>
            <person name="Logan S.M."/>
        </authorList>
    </citation>
    <scope>GLYCOSYLATION AT ASN-38 AND ASN-175</scope>
    <scope>GLYCAN STRUCTURE</scope>
    <scope>IDENTIFICATION BY MASS SPECTROMETRY</scope>
    <source>
        <strain>ATCC 33273 / DSM 1537 / NBRC 100457 / OCM 70 / PS</strain>
    </source>
</reference>
<protein>
    <recommendedName>
        <fullName>Flagellin A</fullName>
    </recommendedName>
</protein>
<comment type="function">
    <text>Flagellin is the subunit protein which polymerizes to form the filaments of archaeal flagella.</text>
</comment>
<comment type="subcellular location">
    <subcellularLocation>
        <location>Archaeal flagellum</location>
    </subcellularLocation>
</comment>
<comment type="PTM">
    <text evidence="1">N-linked glycans consist of the 779 Da trisaccharide beta-ManNAc(Thr)-(1-4)-beta-GlcNAc3NAcA-(1-3)-beta-GlcNAc.</text>
</comment>
<comment type="similarity">
    <text evidence="2">Belongs to the archaeal flagellin family.</text>
</comment>
<organism>
    <name type="scientific">Methanococcus voltae</name>
    <dbReference type="NCBI Taxonomy" id="2188"/>
    <lineage>
        <taxon>Archaea</taxon>
        <taxon>Methanobacteriati</taxon>
        <taxon>Methanobacteriota</taxon>
        <taxon>Methanomada group</taxon>
        <taxon>Methanococci</taxon>
        <taxon>Methanococcales</taxon>
        <taxon>Methanococcaceae</taxon>
        <taxon>Methanococcus</taxon>
    </lineage>
</organism>
<sequence>MKVKEFMNNKKGATGVGTLIVFIAMVLVAAVAASVLINTSGFLQQKASSTGTESTEQVSTGLKMFQTSGKLNEPIIDRLTIYVTPSPGSKPVDLKNTKLLMNRWTFQPPPVSYSSTYFENNNKQIFDVTGSKAWNNGAILPEYNFGVIVIQDDDGSCTAESPVIGKGDMAVITINCTNLDLAPRTRLNGYLQSEIGFKTQFTYILPNAYDKTEDVVILQ</sequence>
<gene>
    <name type="primary">flaA</name>
</gene>
<accession>P27802</accession>
<dbReference type="EMBL" id="M72148">
    <property type="protein sequence ID" value="AAA73073.1"/>
    <property type="molecule type" value="Genomic_DNA"/>
</dbReference>
<dbReference type="PIR" id="A41316">
    <property type="entry name" value="A41316"/>
</dbReference>
<dbReference type="SMR" id="P27802"/>
<dbReference type="GlyCosmos" id="P27802">
    <property type="glycosylation" value="2 sites, No reported glycans"/>
</dbReference>
<dbReference type="iPTMnet" id="P27802"/>
<dbReference type="GO" id="GO:0097589">
    <property type="term" value="C:archaeal-type flagellum"/>
    <property type="evidence" value="ECO:0007669"/>
    <property type="project" value="UniProtKB-SubCell"/>
</dbReference>
<dbReference type="GO" id="GO:0005198">
    <property type="term" value="F:structural molecule activity"/>
    <property type="evidence" value="ECO:0007669"/>
    <property type="project" value="InterPro"/>
</dbReference>
<dbReference type="GO" id="GO:0097588">
    <property type="term" value="P:archaeal or bacterial-type flagellum-dependent cell motility"/>
    <property type="evidence" value="ECO:0007669"/>
    <property type="project" value="InterPro"/>
</dbReference>
<dbReference type="InterPro" id="IPR013373">
    <property type="entry name" value="Flagellin/pilin_N_arc"/>
</dbReference>
<dbReference type="InterPro" id="IPR002774">
    <property type="entry name" value="Flagellin_arc"/>
</dbReference>
<dbReference type="NCBIfam" id="TIGR02537">
    <property type="entry name" value="arch_flag_Nterm"/>
    <property type="match status" value="1"/>
</dbReference>
<dbReference type="PANTHER" id="PTHR35903">
    <property type="entry name" value="FLAGELLIN B1"/>
    <property type="match status" value="1"/>
</dbReference>
<dbReference type="PANTHER" id="PTHR35903:SF1">
    <property type="entry name" value="FLAGELLIN B1"/>
    <property type="match status" value="1"/>
</dbReference>
<dbReference type="Pfam" id="PF01917">
    <property type="entry name" value="Arch_flagellin"/>
    <property type="match status" value="1"/>
</dbReference>
<evidence type="ECO:0000269" key="1">
    <source>
    </source>
</evidence>
<evidence type="ECO:0000305" key="2"/>
<evidence type="ECO:0000305" key="3">
    <source>
    </source>
</evidence>
<feature type="propeptide" id="PRO_0000009385">
    <location>
        <begin position="1"/>
        <end position="12"/>
    </location>
</feature>
<feature type="chain" id="PRO_0000009386" description="Flagellin A">
    <location>
        <begin position="13"/>
        <end position="219"/>
    </location>
</feature>
<feature type="glycosylation site" description="N-linked (GlcNAc...) asparagine" evidence="3">
    <location>
        <position position="38"/>
    </location>
</feature>
<feature type="glycosylation site" description="N-linked (GlcNAc...) asparagine" evidence="1">
    <location>
        <position position="175"/>
    </location>
</feature>